<feature type="chain" id="PRO_0000172795" description="Uronate isomerase">
    <location>
        <begin position="1"/>
        <end position="471"/>
    </location>
</feature>
<comment type="catalytic activity">
    <reaction evidence="1">
        <text>D-glucuronate = D-fructuronate</text>
        <dbReference type="Rhea" id="RHEA:13049"/>
        <dbReference type="ChEBI" id="CHEBI:58720"/>
        <dbReference type="ChEBI" id="CHEBI:59863"/>
        <dbReference type="EC" id="5.3.1.12"/>
    </reaction>
</comment>
<comment type="catalytic activity">
    <reaction evidence="1">
        <text>aldehydo-D-galacturonate = keto-D-tagaturonate</text>
        <dbReference type="Rhea" id="RHEA:27702"/>
        <dbReference type="ChEBI" id="CHEBI:12952"/>
        <dbReference type="ChEBI" id="CHEBI:17886"/>
        <dbReference type="EC" id="5.3.1.12"/>
    </reaction>
</comment>
<comment type="pathway">
    <text evidence="1">Carbohydrate metabolism; pentose and glucuronate interconversion.</text>
</comment>
<comment type="similarity">
    <text evidence="1">Belongs to the metallo-dependent hydrolases superfamily. Uronate isomerase family.</text>
</comment>
<evidence type="ECO:0000255" key="1">
    <source>
        <dbReference type="HAMAP-Rule" id="MF_00675"/>
    </source>
</evidence>
<proteinExistence type="inferred from homology"/>
<dbReference type="EC" id="5.3.1.12" evidence="1"/>
<dbReference type="EMBL" id="AE008922">
    <property type="protein sequence ID" value="AAM43338.1"/>
    <property type="molecule type" value="Genomic_DNA"/>
</dbReference>
<dbReference type="RefSeq" id="NP_639456.1">
    <property type="nucleotide sequence ID" value="NC_003902.1"/>
</dbReference>
<dbReference type="RefSeq" id="WP_011039186.1">
    <property type="nucleotide sequence ID" value="NC_003902.1"/>
</dbReference>
<dbReference type="SMR" id="Q8P3F4"/>
<dbReference type="STRING" id="190485.XCC4117"/>
<dbReference type="EnsemblBacteria" id="AAM43338">
    <property type="protein sequence ID" value="AAM43338"/>
    <property type="gene ID" value="XCC4117"/>
</dbReference>
<dbReference type="KEGG" id="xcc:XCC4117"/>
<dbReference type="PATRIC" id="fig|190485.4.peg.4410"/>
<dbReference type="eggNOG" id="COG1904">
    <property type="taxonomic scope" value="Bacteria"/>
</dbReference>
<dbReference type="HOGENOM" id="CLU_044465_0_0_6"/>
<dbReference type="OrthoDB" id="9766564at2"/>
<dbReference type="UniPathway" id="UPA00246"/>
<dbReference type="Proteomes" id="UP000001010">
    <property type="component" value="Chromosome"/>
</dbReference>
<dbReference type="GO" id="GO:0008880">
    <property type="term" value="F:glucuronate isomerase activity"/>
    <property type="evidence" value="ECO:0007669"/>
    <property type="project" value="UniProtKB-UniRule"/>
</dbReference>
<dbReference type="GO" id="GO:0019698">
    <property type="term" value="P:D-galacturonate catabolic process"/>
    <property type="evidence" value="ECO:0000318"/>
    <property type="project" value="GO_Central"/>
</dbReference>
<dbReference type="GO" id="GO:0042840">
    <property type="term" value="P:D-glucuronate catabolic process"/>
    <property type="evidence" value="ECO:0000318"/>
    <property type="project" value="GO_Central"/>
</dbReference>
<dbReference type="Gene3D" id="3.20.20.140">
    <property type="entry name" value="Metal-dependent hydrolases"/>
    <property type="match status" value="1"/>
</dbReference>
<dbReference type="Gene3D" id="1.10.2020.10">
    <property type="entry name" value="uronate isomerase, domain 2, chain A"/>
    <property type="match status" value="1"/>
</dbReference>
<dbReference type="HAMAP" id="MF_00675">
    <property type="entry name" value="UxaC"/>
    <property type="match status" value="1"/>
</dbReference>
<dbReference type="InterPro" id="IPR032466">
    <property type="entry name" value="Metal_Hydrolase"/>
</dbReference>
<dbReference type="InterPro" id="IPR003766">
    <property type="entry name" value="Uronate_isomerase"/>
</dbReference>
<dbReference type="NCBIfam" id="NF002794">
    <property type="entry name" value="PRK02925.1"/>
    <property type="match status" value="1"/>
</dbReference>
<dbReference type="PANTHER" id="PTHR30068">
    <property type="entry name" value="URONATE ISOMERASE"/>
    <property type="match status" value="1"/>
</dbReference>
<dbReference type="PANTHER" id="PTHR30068:SF4">
    <property type="entry name" value="URONATE ISOMERASE"/>
    <property type="match status" value="1"/>
</dbReference>
<dbReference type="Pfam" id="PF02614">
    <property type="entry name" value="UxaC"/>
    <property type="match status" value="1"/>
</dbReference>
<dbReference type="SUPFAM" id="SSF51556">
    <property type="entry name" value="Metallo-dependent hydrolases"/>
    <property type="match status" value="1"/>
</dbReference>
<accession>Q8P3F4</accession>
<reference key="1">
    <citation type="journal article" date="2002" name="Nature">
        <title>Comparison of the genomes of two Xanthomonas pathogens with differing host specificities.</title>
        <authorList>
            <person name="da Silva A.C.R."/>
            <person name="Ferro J.A."/>
            <person name="Reinach F.C."/>
            <person name="Farah C.S."/>
            <person name="Furlan L.R."/>
            <person name="Quaggio R.B."/>
            <person name="Monteiro-Vitorello C.B."/>
            <person name="Van Sluys M.A."/>
            <person name="Almeida N.F. Jr."/>
            <person name="Alves L.M.C."/>
            <person name="do Amaral A.M."/>
            <person name="Bertolini M.C."/>
            <person name="Camargo L.E.A."/>
            <person name="Camarotte G."/>
            <person name="Cannavan F."/>
            <person name="Cardozo J."/>
            <person name="Chambergo F."/>
            <person name="Ciapina L.P."/>
            <person name="Cicarelli R.M.B."/>
            <person name="Coutinho L.L."/>
            <person name="Cursino-Santos J.R."/>
            <person name="El-Dorry H."/>
            <person name="Faria J.B."/>
            <person name="Ferreira A.J.S."/>
            <person name="Ferreira R.C.C."/>
            <person name="Ferro M.I.T."/>
            <person name="Formighieri E.F."/>
            <person name="Franco M.C."/>
            <person name="Greggio C.C."/>
            <person name="Gruber A."/>
            <person name="Katsuyama A.M."/>
            <person name="Kishi L.T."/>
            <person name="Leite R.P."/>
            <person name="Lemos E.G.M."/>
            <person name="Lemos M.V.F."/>
            <person name="Locali E.C."/>
            <person name="Machado M.A."/>
            <person name="Madeira A.M.B.N."/>
            <person name="Martinez-Rossi N.M."/>
            <person name="Martins E.C."/>
            <person name="Meidanis J."/>
            <person name="Menck C.F.M."/>
            <person name="Miyaki C.Y."/>
            <person name="Moon D.H."/>
            <person name="Moreira L.M."/>
            <person name="Novo M.T.M."/>
            <person name="Okura V.K."/>
            <person name="Oliveira M.C."/>
            <person name="Oliveira V.R."/>
            <person name="Pereira H.A."/>
            <person name="Rossi A."/>
            <person name="Sena J.A.D."/>
            <person name="Silva C."/>
            <person name="de Souza R.F."/>
            <person name="Spinola L.A.F."/>
            <person name="Takita M.A."/>
            <person name="Tamura R.E."/>
            <person name="Teixeira E.C."/>
            <person name="Tezza R.I.D."/>
            <person name="Trindade dos Santos M."/>
            <person name="Truffi D."/>
            <person name="Tsai S.M."/>
            <person name="White F.F."/>
            <person name="Setubal J.C."/>
            <person name="Kitajima J.P."/>
        </authorList>
    </citation>
    <scope>NUCLEOTIDE SEQUENCE [LARGE SCALE GENOMIC DNA]</scope>
    <source>
        <strain>ATCC 33913 / DSM 3586 / NCPPB 528 / LMG 568 / P 25</strain>
    </source>
</reference>
<protein>
    <recommendedName>
        <fullName evidence="1">Uronate isomerase</fullName>
        <ecNumber evidence="1">5.3.1.12</ecNumber>
    </recommendedName>
    <alternativeName>
        <fullName evidence="1">Glucuronate isomerase</fullName>
    </alternativeName>
    <alternativeName>
        <fullName evidence="1">Uronic isomerase</fullName>
    </alternativeName>
</protein>
<name>UXAC_XANCP</name>
<keyword id="KW-0413">Isomerase</keyword>
<keyword id="KW-1185">Reference proteome</keyword>
<sequence>MPTPLILHDDRLLPADPATRAIARRLYAQTAALPIISPHGHTDPAWFATDAPFANATELLLVPDHYVFRMLYSQGIDLDQLGIPHADGSRAPVDPREAWRVFASQFALLRGTPSALWLNHVFHQVFDLRIRLDAGSADHYYDHITAALQTPAFRPRALFERFNIEVIATTESPLDTLEHHATIRDSGWTGRVLTAYRPDAVVDPEHEQFASALQQFAALTGEDVMQWPGYLCAHRQRRAFFAAAGATSTDHGHPSAATADLSPAEAQRLFDTVVRGQATPAQAELFRAQVLTEMAAMSVDDGLVMQLHPGCFRNHNRQLFERYGRDKGADIPMRTDYVHALKPLLDRFGNDPRFRLIVFTLDETSYSRELAPLAGHYPALLLGPAWWFHDAPEGMWRFREQTLASAGFYNTVGFNDDTRAFLSIPARHDVARRVDSAFLAKLVAEHRLDEDEAMEVAIDLAYRLPKQAYKL</sequence>
<gene>
    <name evidence="1" type="primary">uxaC</name>
    <name type="synonym">hrmI</name>
    <name type="ordered locus">XCC4117</name>
</gene>
<organism>
    <name type="scientific">Xanthomonas campestris pv. campestris (strain ATCC 33913 / DSM 3586 / NCPPB 528 / LMG 568 / P 25)</name>
    <dbReference type="NCBI Taxonomy" id="190485"/>
    <lineage>
        <taxon>Bacteria</taxon>
        <taxon>Pseudomonadati</taxon>
        <taxon>Pseudomonadota</taxon>
        <taxon>Gammaproteobacteria</taxon>
        <taxon>Lysobacterales</taxon>
        <taxon>Lysobacteraceae</taxon>
        <taxon>Xanthomonas</taxon>
    </lineage>
</organism>